<feature type="signal peptide" evidence="2">
    <location>
        <begin position="1"/>
        <end position="20"/>
    </location>
</feature>
<feature type="chain" id="PRO_0000411570" description="Iron ABC transporter substrate-binding lipoprotein MtsA">
    <location>
        <begin position="21"/>
        <end position="310"/>
    </location>
</feature>
<feature type="binding site" evidence="1">
    <location>
        <position position="68"/>
    </location>
    <ligand>
        <name>Fe(2+)</name>
        <dbReference type="ChEBI" id="CHEBI:29033"/>
    </ligand>
</feature>
<feature type="binding site" evidence="1">
    <location>
        <position position="140"/>
    </location>
    <ligand>
        <name>Fe(2+)</name>
        <dbReference type="ChEBI" id="CHEBI:29033"/>
    </ligand>
</feature>
<feature type="binding site" evidence="1">
    <location>
        <position position="206"/>
    </location>
    <ligand>
        <name>Fe(2+)</name>
        <dbReference type="ChEBI" id="CHEBI:29033"/>
    </ligand>
</feature>
<feature type="binding site" evidence="1">
    <location>
        <position position="281"/>
    </location>
    <ligand>
        <name>Fe(2+)</name>
        <dbReference type="ChEBI" id="CHEBI:29033"/>
    </ligand>
</feature>
<feature type="lipid moiety-binding region" description="N-palmitoyl cysteine" evidence="2">
    <location>
        <position position="21"/>
    </location>
</feature>
<feature type="lipid moiety-binding region" description="S-diacylglycerol cysteine" evidence="2">
    <location>
        <position position="21"/>
    </location>
</feature>
<reference key="1">
    <citation type="journal article" date="2003" name="Genome Res.">
        <title>Genome sequence of an M3 strain of Streptococcus pyogenes reveals a large-scale genomic rearrangement in invasive strains and new insights into phage evolution.</title>
        <authorList>
            <person name="Nakagawa I."/>
            <person name="Kurokawa K."/>
            <person name="Yamashita A."/>
            <person name="Nakata M."/>
            <person name="Tomiyasu Y."/>
            <person name="Okahashi N."/>
            <person name="Kawabata S."/>
            <person name="Yamazaki K."/>
            <person name="Shiba T."/>
            <person name="Yasunaga T."/>
            <person name="Hayashi H."/>
            <person name="Hattori M."/>
            <person name="Hamada S."/>
        </authorList>
    </citation>
    <scope>NUCLEOTIDE SEQUENCE [LARGE SCALE GENOMIC DNA]</scope>
    <source>
        <strain>SSI-1</strain>
    </source>
</reference>
<accession>P0DF61</accession>
<accession>P0A4G5</accession>
<accession>Q9A157</accession>
<accession>Q9RNI7</accession>
<accession>Q9RNJ0</accession>
<keyword id="KW-1003">Cell membrane</keyword>
<keyword id="KW-0406">Ion transport</keyword>
<keyword id="KW-0408">Iron</keyword>
<keyword id="KW-0410">Iron transport</keyword>
<keyword id="KW-0449">Lipoprotein</keyword>
<keyword id="KW-0472">Membrane</keyword>
<keyword id="KW-0479">Metal-binding</keyword>
<keyword id="KW-0564">Palmitate</keyword>
<keyword id="KW-0732">Signal</keyword>
<keyword id="KW-0813">Transport</keyword>
<proteinExistence type="inferred from homology"/>
<organism>
    <name type="scientific">Streptococcus pyogenes serotype M3 (strain SSI-1)</name>
    <dbReference type="NCBI Taxonomy" id="193567"/>
    <lineage>
        <taxon>Bacteria</taxon>
        <taxon>Bacillati</taxon>
        <taxon>Bacillota</taxon>
        <taxon>Bacilli</taxon>
        <taxon>Lactobacillales</taxon>
        <taxon>Streptococcaceae</taxon>
        <taxon>Streptococcus</taxon>
    </lineage>
</organism>
<evidence type="ECO:0000250" key="1">
    <source>
        <dbReference type="UniProtKB" id="P0A4G4"/>
    </source>
</evidence>
<evidence type="ECO:0000255" key="2">
    <source>
        <dbReference type="PROSITE-ProRule" id="PRU00303"/>
    </source>
</evidence>
<evidence type="ECO:0000305" key="3"/>
<comment type="function">
    <text evidence="1">Part of the ATP-binding cassette (ABC) transport system MtsABC involved in iron import. Binds iron with high affinity and specificity and delivers it to the membrane permease for translocation into the cytoplasm. Has low affinity for Zn(2+) and Cu(2+).</text>
</comment>
<comment type="subcellular location">
    <subcellularLocation>
        <location evidence="2">Cell membrane</location>
        <topology evidence="2">Lipid-anchor</topology>
    </subcellularLocation>
</comment>
<comment type="similarity">
    <text evidence="3">Belongs to the bacterial solute-binding protein 9 family. Lipoprotein receptor antigen (Lrai) subfamily.</text>
</comment>
<comment type="sequence caution" evidence="3">
    <conflict type="erroneous initiation">
        <sequence resource="EMBL-CDS" id="BAC64634"/>
    </conflict>
</comment>
<sequence>MGKRMSLILGAFLSVFLLVACSSTGTKTAKSDKLKVVATNSIIADMTKAIAGDKIDLHSIVPIGQDPHEYEPLPEDVEKTSNADVIFYNGINLEDGGQAWFTKLVKNAQKTKNKDYFAVSDGIDVIYLEGASEKGKEDPHAWLNLENGIIYSKNIAKQLIAKDPKNKETYEKNLKAYVAKLEKLDKEAKSKFDAIAENKKLIVTSEGCFKYFSKAYGVPSAYIWEINTEEEGTPDQISSLIEKLKVIKPSALFVESSVDRRPMETVSKDSGIPIYSEIFTDSIAKKGKPGDSYYAMMKWNLDKISEGLAK</sequence>
<name>MTSA_STRPQ</name>
<gene>
    <name type="primary">mtsA</name>
    <name type="ordered locus">SPs1539</name>
</gene>
<dbReference type="EMBL" id="BA000034">
    <property type="protein sequence ID" value="BAC64634.1"/>
    <property type="status" value="ALT_INIT"/>
    <property type="molecule type" value="Genomic_DNA"/>
</dbReference>
<dbReference type="RefSeq" id="WP_004218965.1">
    <property type="nucleotide sequence ID" value="NC_004606.1"/>
</dbReference>
<dbReference type="SMR" id="P0DF61"/>
<dbReference type="KEGG" id="sps:SPs1539"/>
<dbReference type="HOGENOM" id="CLU_016838_1_1_9"/>
<dbReference type="GO" id="GO:0005886">
    <property type="term" value="C:plasma membrane"/>
    <property type="evidence" value="ECO:0007669"/>
    <property type="project" value="UniProtKB-SubCell"/>
</dbReference>
<dbReference type="GO" id="GO:0046872">
    <property type="term" value="F:metal ion binding"/>
    <property type="evidence" value="ECO:0007669"/>
    <property type="project" value="UniProtKB-KW"/>
</dbReference>
<dbReference type="GO" id="GO:0007155">
    <property type="term" value="P:cell adhesion"/>
    <property type="evidence" value="ECO:0007669"/>
    <property type="project" value="InterPro"/>
</dbReference>
<dbReference type="GO" id="GO:0006826">
    <property type="term" value="P:iron ion transport"/>
    <property type="evidence" value="ECO:0007669"/>
    <property type="project" value="UniProtKB-KW"/>
</dbReference>
<dbReference type="CDD" id="cd01137">
    <property type="entry name" value="PsaA"/>
    <property type="match status" value="1"/>
</dbReference>
<dbReference type="Gene3D" id="3.40.50.1980">
    <property type="entry name" value="Nitrogenase molybdenum iron protein domain"/>
    <property type="match status" value="2"/>
</dbReference>
<dbReference type="InterPro" id="IPR006129">
    <property type="entry name" value="AdhesinB"/>
</dbReference>
<dbReference type="InterPro" id="IPR050492">
    <property type="entry name" value="Bact_metal-bind_prot9"/>
</dbReference>
<dbReference type="InterPro" id="IPR006128">
    <property type="entry name" value="Lipoprotein_PsaA-like"/>
</dbReference>
<dbReference type="InterPro" id="IPR006127">
    <property type="entry name" value="ZnuA-like"/>
</dbReference>
<dbReference type="NCBIfam" id="NF040928">
    <property type="entry name" value="ABC_lipo_SloC"/>
    <property type="match status" value="1"/>
</dbReference>
<dbReference type="PANTHER" id="PTHR42953">
    <property type="entry name" value="HIGH-AFFINITY ZINC UPTAKE SYSTEM PROTEIN ZNUA-RELATED"/>
    <property type="match status" value="1"/>
</dbReference>
<dbReference type="PANTHER" id="PTHR42953:SF1">
    <property type="entry name" value="METAL-BINDING PROTEIN HI_0362-RELATED"/>
    <property type="match status" value="1"/>
</dbReference>
<dbReference type="Pfam" id="PF01297">
    <property type="entry name" value="ZnuA"/>
    <property type="match status" value="1"/>
</dbReference>
<dbReference type="PRINTS" id="PR00691">
    <property type="entry name" value="ADHESINB"/>
</dbReference>
<dbReference type="PRINTS" id="PR00690">
    <property type="entry name" value="ADHESNFAMILY"/>
</dbReference>
<dbReference type="SUPFAM" id="SSF53807">
    <property type="entry name" value="Helical backbone' metal receptor"/>
    <property type="match status" value="1"/>
</dbReference>
<dbReference type="PROSITE" id="PS51257">
    <property type="entry name" value="PROKAR_LIPOPROTEIN"/>
    <property type="match status" value="1"/>
</dbReference>
<protein>
    <recommendedName>
        <fullName evidence="3">Iron ABC transporter substrate-binding lipoprotein MtsA</fullName>
    </recommendedName>
</protein>